<feature type="initiator methionine" description="Removed" evidence="8">
    <location>
        <position position="1"/>
    </location>
</feature>
<feature type="chain" id="PRO_0000160731" description="Alcohol dehydrogenase 2">
    <location>
        <begin position="2"/>
        <end position="348"/>
    </location>
</feature>
<feature type="binding site" evidence="1">
    <location>
        <position position="44"/>
    </location>
    <ligand>
        <name>Zn(2+)</name>
        <dbReference type="ChEBI" id="CHEBI:29105"/>
        <label>1</label>
        <note>catalytic</note>
    </ligand>
</feature>
<feature type="binding site" evidence="1">
    <location>
        <position position="45"/>
    </location>
    <ligand>
        <name>NAD(+)</name>
        <dbReference type="ChEBI" id="CHEBI:57540"/>
    </ligand>
</feature>
<feature type="binding site" evidence="1">
    <location>
        <position position="46"/>
    </location>
    <ligand>
        <name>NAD(+)</name>
        <dbReference type="ChEBI" id="CHEBI:57540"/>
    </ligand>
</feature>
<feature type="binding site" evidence="1">
    <location>
        <position position="49"/>
    </location>
    <ligand>
        <name>NAD(+)</name>
        <dbReference type="ChEBI" id="CHEBI:57540"/>
    </ligand>
</feature>
<feature type="binding site" evidence="1">
    <location>
        <position position="67"/>
    </location>
    <ligand>
        <name>Zn(2+)</name>
        <dbReference type="ChEBI" id="CHEBI:29105"/>
        <label>1</label>
        <note>catalytic</note>
    </ligand>
</feature>
<feature type="binding site" evidence="1">
    <location>
        <position position="68"/>
    </location>
    <ligand>
        <name>Zn(2+)</name>
        <dbReference type="ChEBI" id="CHEBI:29105"/>
        <label>1</label>
        <note>catalytic</note>
    </ligand>
</feature>
<feature type="binding site" evidence="1">
    <location>
        <position position="98"/>
    </location>
    <ligand>
        <name>Zn(2+)</name>
        <dbReference type="ChEBI" id="CHEBI:29105"/>
        <label>2</label>
    </ligand>
</feature>
<feature type="binding site" evidence="1">
    <location>
        <position position="101"/>
    </location>
    <ligand>
        <name>Zn(2+)</name>
        <dbReference type="ChEBI" id="CHEBI:29105"/>
        <label>2</label>
    </ligand>
</feature>
<feature type="binding site" evidence="1">
    <location>
        <position position="104"/>
    </location>
    <ligand>
        <name>Zn(2+)</name>
        <dbReference type="ChEBI" id="CHEBI:29105"/>
        <label>2</label>
    </ligand>
</feature>
<feature type="binding site" evidence="1">
    <location>
        <position position="112"/>
    </location>
    <ligand>
        <name>Zn(2+)</name>
        <dbReference type="ChEBI" id="CHEBI:29105"/>
        <label>2</label>
    </ligand>
</feature>
<feature type="binding site" evidence="1">
    <location>
        <position position="154"/>
    </location>
    <ligand>
        <name>Zn(2+)</name>
        <dbReference type="ChEBI" id="CHEBI:29105"/>
        <label>1</label>
        <note>catalytic</note>
    </ligand>
</feature>
<feature type="binding site" evidence="1">
    <location>
        <position position="181"/>
    </location>
    <ligand>
        <name>NAD(+)</name>
        <dbReference type="ChEBI" id="CHEBI:57540"/>
    </ligand>
</feature>
<feature type="binding site" evidence="1">
    <location>
        <position position="182"/>
    </location>
    <ligand>
        <name>NAD(+)</name>
        <dbReference type="ChEBI" id="CHEBI:57540"/>
    </ligand>
</feature>
<feature type="binding site" evidence="1">
    <location>
        <position position="183"/>
    </location>
    <ligand>
        <name>NAD(+)</name>
        <dbReference type="ChEBI" id="CHEBI:57540"/>
    </ligand>
</feature>
<feature type="binding site" evidence="1">
    <location>
        <position position="202"/>
    </location>
    <ligand>
        <name>NAD(+)</name>
        <dbReference type="ChEBI" id="CHEBI:57540"/>
    </ligand>
</feature>
<feature type="binding site" evidence="1">
    <location>
        <position position="207"/>
    </location>
    <ligand>
        <name>NAD(+)</name>
        <dbReference type="ChEBI" id="CHEBI:57540"/>
    </ligand>
</feature>
<feature type="binding site" evidence="1">
    <location>
        <position position="222"/>
    </location>
    <ligand>
        <name>NAD(+)</name>
        <dbReference type="ChEBI" id="CHEBI:57540"/>
    </ligand>
</feature>
<feature type="binding site" evidence="1">
    <location>
        <position position="269"/>
    </location>
    <ligand>
        <name>NAD(+)</name>
        <dbReference type="ChEBI" id="CHEBI:57540"/>
    </ligand>
</feature>
<feature type="binding site" evidence="1">
    <location>
        <position position="294"/>
    </location>
    <ligand>
        <name>NAD(+)</name>
        <dbReference type="ChEBI" id="CHEBI:57540"/>
    </ligand>
</feature>
<feature type="binding site" evidence="1">
    <location>
        <position position="296"/>
    </location>
    <ligand>
        <name>NAD(+)</name>
        <dbReference type="ChEBI" id="CHEBI:57540"/>
    </ligand>
</feature>
<feature type="binding site" evidence="1">
    <location>
        <position position="341"/>
    </location>
    <ligand>
        <name>NAD(+)</name>
        <dbReference type="ChEBI" id="CHEBI:57540"/>
    </ligand>
</feature>
<feature type="modified residue" description="N-acetylserine" evidence="8">
    <location>
        <position position="2"/>
    </location>
</feature>
<feature type="modified residue" description="Phosphoserine" evidence="1">
    <location>
        <position position="213"/>
    </location>
</feature>
<feature type="modified residue" description="Phosphothreonine" evidence="1">
    <location>
        <position position="223"/>
    </location>
</feature>
<feature type="modified residue" description="Phosphoserine" evidence="1">
    <location>
        <position position="279"/>
    </location>
</feature>
<feature type="modified residue" description="Phosphoserine" evidence="1">
    <location>
        <position position="316"/>
    </location>
</feature>
<feature type="cross-link" description="Glycyl lysine isopeptide (Lys-Gly) (interchain with G-Cter in ubiquitin)" evidence="1">
    <location>
        <position position="226"/>
    </location>
</feature>
<feature type="cross-link" description="Glycyl lysine isopeptide (Lys-Gly) (interchain with G-Cter in ubiquitin)" evidence="1">
    <location>
        <position position="234"/>
    </location>
</feature>
<feature type="cross-link" description="Glycyl lysine isopeptide (Lys-Gly) (interchain with G-Cter in ubiquitin)" evidence="1">
    <location>
        <position position="287"/>
    </location>
</feature>
<feature type="cross-link" description="Glycyl lysine isopeptide (Lys-Gly) (interchain with G-Cter in ubiquitin)" evidence="1">
    <location>
        <position position="319"/>
    </location>
</feature>
<feature type="sequence conflict" description="In Ref. 2; AAA34411." evidence="9" ref="2">
    <original>N</original>
    <variation>H</variation>
    <location>
        <position position="16"/>
    </location>
</feature>
<feature type="sequence conflict" description="In Ref. 2; AAA34411." evidence="9" ref="2">
    <original>P</original>
    <variation>A</variation>
    <location>
        <position position="31"/>
    </location>
</feature>
<feature type="sequence conflict" description="In Ref. 5; AA sequence." evidence="9" ref="5">
    <original>V</original>
    <variation>K</variation>
    <location>
        <position position="233"/>
    </location>
</feature>
<comment type="function">
    <text evidence="4 6 10">Preferentially oxidative, glucose-repressed isozyme that catalyzes the conversion of ethanol to acetaldehyde. Main enzyme involved in ethanol consumption. Acts on a variety of primary unbranched aliphatic alcohols (Probable) (PubMed:3546317). Also produces ethanol from glucose, albeit less than ADH1 (PubMed:22094012).</text>
</comment>
<comment type="catalytic activity">
    <reaction evidence="10">
        <text>a primary alcohol + NAD(+) = an aldehyde + NADH + H(+)</text>
        <dbReference type="Rhea" id="RHEA:10736"/>
        <dbReference type="ChEBI" id="CHEBI:15378"/>
        <dbReference type="ChEBI" id="CHEBI:15734"/>
        <dbReference type="ChEBI" id="CHEBI:17478"/>
        <dbReference type="ChEBI" id="CHEBI:57540"/>
        <dbReference type="ChEBI" id="CHEBI:57945"/>
        <dbReference type="EC" id="1.1.1.1"/>
    </reaction>
</comment>
<comment type="catalytic activity">
    <reaction evidence="10">
        <text>a secondary alcohol + NAD(+) = a ketone + NADH + H(+)</text>
        <dbReference type="Rhea" id="RHEA:10740"/>
        <dbReference type="ChEBI" id="CHEBI:15378"/>
        <dbReference type="ChEBI" id="CHEBI:17087"/>
        <dbReference type="ChEBI" id="CHEBI:35681"/>
        <dbReference type="ChEBI" id="CHEBI:57540"/>
        <dbReference type="ChEBI" id="CHEBI:57945"/>
        <dbReference type="EC" id="1.1.1.1"/>
    </reaction>
</comment>
<comment type="catalytic activity">
    <reaction evidence="6">
        <text>ethanol + NAD(+) = acetaldehyde + NADH + H(+)</text>
        <dbReference type="Rhea" id="RHEA:25290"/>
        <dbReference type="ChEBI" id="CHEBI:15343"/>
        <dbReference type="ChEBI" id="CHEBI:15378"/>
        <dbReference type="ChEBI" id="CHEBI:16236"/>
        <dbReference type="ChEBI" id="CHEBI:57540"/>
        <dbReference type="ChEBI" id="CHEBI:57945"/>
        <dbReference type="EC" id="1.1.1.1"/>
    </reaction>
    <physiologicalReaction direction="left-to-right" evidence="6">
        <dbReference type="Rhea" id="RHEA:25291"/>
    </physiologicalReaction>
    <physiologicalReaction direction="right-to-left" evidence="6">
        <dbReference type="Rhea" id="RHEA:25292"/>
    </physiologicalReaction>
</comment>
<comment type="catalytic activity">
    <reaction evidence="6">
        <text>butan-1-ol + NAD(+) = butanal + NADH + H(+)</text>
        <dbReference type="Rhea" id="RHEA:33199"/>
        <dbReference type="ChEBI" id="CHEBI:15378"/>
        <dbReference type="ChEBI" id="CHEBI:15743"/>
        <dbReference type="ChEBI" id="CHEBI:28885"/>
        <dbReference type="ChEBI" id="CHEBI:57540"/>
        <dbReference type="ChEBI" id="CHEBI:57945"/>
    </reaction>
    <physiologicalReaction direction="left-to-right" evidence="6">
        <dbReference type="Rhea" id="RHEA:33200"/>
    </physiologicalReaction>
</comment>
<comment type="catalytic activity">
    <reaction evidence="6">
        <text>hexan-1-ol + NAD(+) = hexanal + NADH + H(+)</text>
        <dbReference type="Rhea" id="RHEA:60972"/>
        <dbReference type="ChEBI" id="CHEBI:15378"/>
        <dbReference type="ChEBI" id="CHEBI:57540"/>
        <dbReference type="ChEBI" id="CHEBI:57945"/>
        <dbReference type="ChEBI" id="CHEBI:87393"/>
        <dbReference type="ChEBI" id="CHEBI:88528"/>
    </reaction>
    <physiologicalReaction direction="left-to-right" evidence="6">
        <dbReference type="Rhea" id="RHEA:60973"/>
    </physiologicalReaction>
</comment>
<comment type="cofactor">
    <cofactor evidence="1">
        <name>Zn(2+)</name>
        <dbReference type="ChEBI" id="CHEBI:29105"/>
    </cofactor>
    <text evidence="1">Binds 2 Zn(2+) ions per subunit.</text>
</comment>
<comment type="biophysicochemical properties">
    <kinetics>
        <KM evidence="6">110 uM for NAD(+)</KM>
        <KM evidence="6">0.81 mM for ethanol</KM>
        <KM evidence="6">0.09 mM for acetaldehyde</KM>
        <KM evidence="6">50 uM for NADH</KM>
        <KM evidence="6">2.6 mM for propanol</KM>
        <KM evidence="6">2.9 mM for butanol</KM>
        <KM evidence="6">3.8 mM for pentanol</KM>
        <KM evidence="6">1.4 mM for hexanol</KM>
    </kinetics>
</comment>
<comment type="subunit">
    <text>Homotetramer.</text>
</comment>
<comment type="subcellular location">
    <subcellularLocation>
        <location evidence="2 5">Cytoplasm</location>
    </subcellularLocation>
</comment>
<comment type="induction">
    <text evidence="7">Repressed by glucose and expressed during anaerobic fermentation.</text>
</comment>
<comment type="miscellaneous">
    <text evidence="3">Present with 1620 molecules/cell in log phase SD medium.</text>
</comment>
<comment type="similarity">
    <text evidence="9">Belongs to the zinc-containing alcohol dehydrogenase family.</text>
</comment>
<reference key="1">
    <citation type="journal article" date="1983" name="J. Biol. Chem.">
        <title>Nucleotide sequence of the yeast alcohol dehydrogenase II gene.</title>
        <authorList>
            <person name="Russell D.W."/>
            <person name="Smith M."/>
            <person name="Williamson V.M."/>
            <person name="Young E.T."/>
        </authorList>
    </citation>
    <scope>NUCLEOTIDE SEQUENCE [GENOMIC DNA]</scope>
</reference>
<reference key="2">
    <citation type="journal article" date="1982" name="Basic Life Sci.">
        <title>The alcohol dehydrogenase genes of the yeast, Saccharomyces cerevisiae: isolation, structure, and regulation.</title>
        <authorList>
            <person name="Young E.T."/>
            <person name="Williamson V.M."/>
            <person name="Taguchi A."/>
            <person name="Smith M."/>
            <person name="Sledziewski A."/>
            <person name="Russell D.W."/>
            <person name="Osterman J."/>
            <person name="Denis C."/>
            <person name="Cox D."/>
            <person name="Beier D."/>
        </authorList>
    </citation>
    <scope>NUCLEOTIDE SEQUENCE [GENOMIC DNA]</scope>
</reference>
<reference key="3">
    <citation type="journal article" date="1997" name="Nature">
        <title>The nucleotide sequence of Saccharomyces cerevisiae chromosome XIII.</title>
        <authorList>
            <person name="Bowman S."/>
            <person name="Churcher C.M."/>
            <person name="Badcock K."/>
            <person name="Brown D."/>
            <person name="Chillingworth T."/>
            <person name="Connor R."/>
            <person name="Dedman K."/>
            <person name="Devlin K."/>
            <person name="Gentles S."/>
            <person name="Hamlin N."/>
            <person name="Hunt S."/>
            <person name="Jagels K."/>
            <person name="Lye G."/>
            <person name="Moule S."/>
            <person name="Odell C."/>
            <person name="Pearson D."/>
            <person name="Rajandream M.A."/>
            <person name="Rice P."/>
            <person name="Skelton J."/>
            <person name="Walsh S.V."/>
            <person name="Whitehead S."/>
            <person name="Barrell B.G."/>
        </authorList>
    </citation>
    <scope>NUCLEOTIDE SEQUENCE [LARGE SCALE GENOMIC DNA]</scope>
    <source>
        <strain>ATCC 204508 / S288c</strain>
    </source>
</reference>
<reference key="4">
    <citation type="journal article" date="2014" name="G3 (Bethesda)">
        <title>The reference genome sequence of Saccharomyces cerevisiae: Then and now.</title>
        <authorList>
            <person name="Engel S.R."/>
            <person name="Dietrich F.S."/>
            <person name="Fisk D.G."/>
            <person name="Binkley G."/>
            <person name="Balakrishnan R."/>
            <person name="Costanzo M.C."/>
            <person name="Dwight S.S."/>
            <person name="Hitz B.C."/>
            <person name="Karra K."/>
            <person name="Nash R.S."/>
            <person name="Weng S."/>
            <person name="Wong E.D."/>
            <person name="Lloyd P."/>
            <person name="Skrzypek M.S."/>
            <person name="Miyasato S.R."/>
            <person name="Simison M."/>
            <person name="Cherry J.M."/>
        </authorList>
    </citation>
    <scope>GENOME REANNOTATION</scope>
    <source>
        <strain>ATCC 204508 / S288c</strain>
    </source>
</reference>
<reference key="5">
    <citation type="journal article" date="1994" name="Electrophoresis">
        <title>Protein identifications for a Saccharomyces cerevisiae protein database.</title>
        <authorList>
            <person name="Garrels J.I."/>
            <person name="Futcher B."/>
            <person name="Kobayashi R."/>
            <person name="Latter G.I."/>
            <person name="Schwender B."/>
            <person name="Volpe T."/>
            <person name="Warner J.R."/>
            <person name="McLaughlin C.S."/>
        </authorList>
    </citation>
    <scope>PROTEIN SEQUENCE OF 193-207 AND 227-234</scope>
    <source>
        <strain>ATCC 204508 / S288c</strain>
    </source>
</reference>
<reference key="6">
    <citation type="journal article" date="1980" name="Nature">
        <title>Isolation of the structural gene for alcohol dehydrogenase by genetic complementation in yeast.</title>
        <authorList>
            <person name="Williamson V.M."/>
            <person name="Bennetzen J.L."/>
            <person name="Young E.T."/>
            <person name="Nasmyth K."/>
            <person name="Hall B.D."/>
        </authorList>
    </citation>
    <scope>INDUCTION</scope>
</reference>
<reference key="7">
    <citation type="journal article" date="1986" name="EMBO J.">
        <title>Intracellular sorting of alcohol dehydrogenase isoenzymes in yeast: a cytosolic location reflects absence of an amino-terminal targeting sequence for the mitochondrion.</title>
        <authorList>
            <person name="van Loon A.P."/>
            <person name="Young E.T."/>
        </authorList>
    </citation>
    <scope>SUBCELLULAR LOCATION</scope>
</reference>
<reference key="8">
    <citation type="journal article" date="1987" name="J. Biol. Chem.">
        <title>Kinetic characterization of yeast alcohol dehydrogenases. Amino acid residue 294 and substrate specificity.</title>
        <authorList>
            <person name="Ganzhorn A.J."/>
            <person name="Green D.W."/>
            <person name="Hershey A.D."/>
            <person name="Gould R.M."/>
            <person name="Plapp B.V."/>
        </authorList>
    </citation>
    <scope>FUNCTION</scope>
    <scope>CATALYTIC ACTIVITY</scope>
    <scope>BIOPHYSICOCHEMICAL PROPERTIES</scope>
</reference>
<reference key="9">
    <citation type="journal article" date="1997" name="Electrophoresis">
        <title>Proteome studies of Saccharomyces cerevisiae: identification and characterization of abundant proteins.</title>
        <authorList>
            <person name="Garrels J.I."/>
            <person name="McLaughlin C.S."/>
            <person name="Warner J.R."/>
            <person name="Futcher B."/>
            <person name="Latter G.I."/>
            <person name="Kobayashi R."/>
            <person name="Schwender B."/>
            <person name="Volpe T."/>
            <person name="Anderson D.S."/>
            <person name="Mesquita-Fuentes R."/>
            <person name="Payne W.E."/>
        </authorList>
    </citation>
    <scope>ACETYLATION AT SER-2</scope>
</reference>
<reference key="10">
    <citation type="journal article" date="2002" name="FEMS Yeast Res.">
        <title>The three zinc-containing alcohol dehydrogenases from baker's yeast, Saccharomyces cerevisiae.</title>
        <authorList>
            <person name="Leskovac V."/>
            <person name="Trivic S."/>
            <person name="Pericin D."/>
        </authorList>
    </citation>
    <scope>REVIEW</scope>
</reference>
<reference key="11">
    <citation type="journal article" date="2003" name="Nature">
        <title>Global analysis of protein localization in budding yeast.</title>
        <authorList>
            <person name="Huh W.-K."/>
            <person name="Falvo J.V."/>
            <person name="Gerke L.C."/>
            <person name="Carroll A.S."/>
            <person name="Howson R.W."/>
            <person name="Weissman J.S."/>
            <person name="O'Shea E.K."/>
        </authorList>
    </citation>
    <scope>SUBCELLULAR LOCATION [LARGE SCALE ANALYSIS]</scope>
</reference>
<reference key="12">
    <citation type="journal article" date="2003" name="Nature">
        <title>Global analysis of protein expression in yeast.</title>
        <authorList>
            <person name="Ghaemmaghami S."/>
            <person name="Huh W.-K."/>
            <person name="Bower K."/>
            <person name="Howson R.W."/>
            <person name="Belle A."/>
            <person name="Dephoure N."/>
            <person name="O'Shea E.K."/>
            <person name="Weissman J.S."/>
        </authorList>
    </citation>
    <scope>LEVEL OF PROTEIN EXPRESSION [LARGE SCALE ANALYSIS]</scope>
</reference>
<reference key="13">
    <citation type="journal article" date="2012" name="FEMS Yeast Res.">
        <title>Molecular and physiological aspects of alcohol dehydrogenases in the ethanol metabolism of Saccharomyces cerevisiae.</title>
        <authorList>
            <person name="de Smidt O."/>
            <person name="du Preez J.C."/>
            <person name="Albertyn J."/>
        </authorList>
    </citation>
    <scope>FUNCTION</scope>
</reference>
<dbReference type="EC" id="1.1.1.1" evidence="6"/>
<dbReference type="EMBL" id="J01314">
    <property type="protein sequence ID" value="AAA34408.1"/>
    <property type="molecule type" value="Genomic_DNA"/>
</dbReference>
<dbReference type="EMBL" id="M38457">
    <property type="protein sequence ID" value="AAA34411.1"/>
    <property type="molecule type" value="Genomic_DNA"/>
</dbReference>
<dbReference type="EMBL" id="Z49212">
    <property type="protein sequence ID" value="CAA89136.1"/>
    <property type="molecule type" value="Genomic_DNA"/>
</dbReference>
<dbReference type="EMBL" id="BK006946">
    <property type="protein sequence ID" value="DAA10204.1"/>
    <property type="molecule type" value="Genomic_DNA"/>
</dbReference>
<dbReference type="PIR" id="A00340">
    <property type="entry name" value="DEBYA2"/>
</dbReference>
<dbReference type="RefSeq" id="NP_014032.1">
    <property type="nucleotide sequence ID" value="NM_001182812.1"/>
</dbReference>
<dbReference type="SMR" id="P00331"/>
<dbReference type="BioGRID" id="35483">
    <property type="interactions" value="91"/>
</dbReference>
<dbReference type="DIP" id="DIP-1181N"/>
<dbReference type="FunCoup" id="P00331">
    <property type="interactions" value="439"/>
</dbReference>
<dbReference type="IntAct" id="P00331">
    <property type="interactions" value="21"/>
</dbReference>
<dbReference type="MINT" id="P00331"/>
<dbReference type="STRING" id="4932.YMR303C"/>
<dbReference type="CarbonylDB" id="P00331"/>
<dbReference type="iPTMnet" id="P00331"/>
<dbReference type="PaxDb" id="4932-YMR303C"/>
<dbReference type="PeptideAtlas" id="P00331"/>
<dbReference type="EnsemblFungi" id="YMR303C_mRNA">
    <property type="protein sequence ID" value="YMR303C"/>
    <property type="gene ID" value="YMR303C"/>
</dbReference>
<dbReference type="GeneID" id="855349"/>
<dbReference type="KEGG" id="sce:YMR303C"/>
<dbReference type="AGR" id="SGD:S000004918"/>
<dbReference type="SGD" id="S000004918">
    <property type="gene designation" value="ADH2"/>
</dbReference>
<dbReference type="VEuPathDB" id="FungiDB:YMR303C"/>
<dbReference type="eggNOG" id="KOG0023">
    <property type="taxonomic scope" value="Eukaryota"/>
</dbReference>
<dbReference type="GeneTree" id="ENSGT00940000171159"/>
<dbReference type="HOGENOM" id="CLU_026673_20_1_1"/>
<dbReference type="InParanoid" id="P00331"/>
<dbReference type="OMA" id="YKGLKMT"/>
<dbReference type="OrthoDB" id="1879366at2759"/>
<dbReference type="BioCyc" id="MetaCyc:YMR303C-MONOMER"/>
<dbReference type="BioCyc" id="YEAST:YMR303C-MONOMER"/>
<dbReference type="BRENDA" id="1.1.1.1">
    <property type="organism ID" value="984"/>
</dbReference>
<dbReference type="BioGRID-ORCS" id="855349">
    <property type="hits" value="4 hits in 10 CRISPR screens"/>
</dbReference>
<dbReference type="PRO" id="PR:P00331"/>
<dbReference type="Proteomes" id="UP000002311">
    <property type="component" value="Chromosome XIII"/>
</dbReference>
<dbReference type="RNAct" id="P00331">
    <property type="molecule type" value="protein"/>
</dbReference>
<dbReference type="GO" id="GO:0005737">
    <property type="term" value="C:cytoplasm"/>
    <property type="evidence" value="ECO:0007005"/>
    <property type="project" value="SGD"/>
</dbReference>
<dbReference type="GO" id="GO:0004022">
    <property type="term" value="F:alcohol dehydrogenase (NAD+) activity"/>
    <property type="evidence" value="ECO:0000314"/>
    <property type="project" value="SGD"/>
</dbReference>
<dbReference type="GO" id="GO:1990362">
    <property type="term" value="F:butanol dehydrogenase (NAD+) activity"/>
    <property type="evidence" value="ECO:0007669"/>
    <property type="project" value="RHEA"/>
</dbReference>
<dbReference type="GO" id="GO:0120542">
    <property type="term" value="F:ethanol dehydrogenase (NAD+) activity"/>
    <property type="evidence" value="ECO:0007669"/>
    <property type="project" value="RHEA"/>
</dbReference>
<dbReference type="GO" id="GO:0008270">
    <property type="term" value="F:zinc ion binding"/>
    <property type="evidence" value="ECO:0007669"/>
    <property type="project" value="InterPro"/>
</dbReference>
<dbReference type="GO" id="GO:0000947">
    <property type="term" value="P:amino acid catabolic process to alcohol via Ehrlich pathway"/>
    <property type="evidence" value="ECO:0000316"/>
    <property type="project" value="SGD"/>
</dbReference>
<dbReference type="GO" id="GO:0006067">
    <property type="term" value="P:ethanol metabolic process"/>
    <property type="evidence" value="ECO:0000314"/>
    <property type="project" value="SGD"/>
</dbReference>
<dbReference type="CDD" id="cd08297">
    <property type="entry name" value="CAD3"/>
    <property type="match status" value="1"/>
</dbReference>
<dbReference type="FunFam" id="3.40.50.720:FF:000039">
    <property type="entry name" value="Alcohol dehydrogenase AdhP"/>
    <property type="match status" value="1"/>
</dbReference>
<dbReference type="FunFam" id="3.90.180.10:FF:000002">
    <property type="entry name" value="Alcohol dehydrogenase AdhP"/>
    <property type="match status" value="1"/>
</dbReference>
<dbReference type="Gene3D" id="3.90.180.10">
    <property type="entry name" value="Medium-chain alcohol dehydrogenases, catalytic domain"/>
    <property type="match status" value="1"/>
</dbReference>
<dbReference type="Gene3D" id="3.40.50.720">
    <property type="entry name" value="NAD(P)-binding Rossmann-like Domain"/>
    <property type="match status" value="1"/>
</dbReference>
<dbReference type="InterPro" id="IPR013149">
    <property type="entry name" value="ADH-like_C"/>
</dbReference>
<dbReference type="InterPro" id="IPR013154">
    <property type="entry name" value="ADH-like_N"/>
</dbReference>
<dbReference type="InterPro" id="IPR002328">
    <property type="entry name" value="ADH_Zn_CS"/>
</dbReference>
<dbReference type="InterPro" id="IPR011032">
    <property type="entry name" value="GroES-like_sf"/>
</dbReference>
<dbReference type="InterPro" id="IPR036291">
    <property type="entry name" value="NAD(P)-bd_dom_sf"/>
</dbReference>
<dbReference type="InterPro" id="IPR020843">
    <property type="entry name" value="PKS_ER"/>
</dbReference>
<dbReference type="PANTHER" id="PTHR42940">
    <property type="entry name" value="ALCOHOL DEHYDROGENASE 1-RELATED"/>
    <property type="match status" value="1"/>
</dbReference>
<dbReference type="PANTHER" id="PTHR42940:SF3">
    <property type="entry name" value="ALCOHOL DEHYDROGENASE 1-RELATED"/>
    <property type="match status" value="1"/>
</dbReference>
<dbReference type="Pfam" id="PF08240">
    <property type="entry name" value="ADH_N"/>
    <property type="match status" value="1"/>
</dbReference>
<dbReference type="Pfam" id="PF00107">
    <property type="entry name" value="ADH_zinc_N"/>
    <property type="match status" value="1"/>
</dbReference>
<dbReference type="SMART" id="SM00829">
    <property type="entry name" value="PKS_ER"/>
    <property type="match status" value="1"/>
</dbReference>
<dbReference type="SUPFAM" id="SSF50129">
    <property type="entry name" value="GroES-like"/>
    <property type="match status" value="1"/>
</dbReference>
<dbReference type="SUPFAM" id="SSF51735">
    <property type="entry name" value="NAD(P)-binding Rossmann-fold domains"/>
    <property type="match status" value="1"/>
</dbReference>
<dbReference type="PROSITE" id="PS00059">
    <property type="entry name" value="ADH_ZINC"/>
    <property type="match status" value="1"/>
</dbReference>
<gene>
    <name type="primary">ADH2</name>
    <name type="synonym">ADR2</name>
    <name type="ordered locus">YMR303C</name>
    <name type="ORF">YM9952.05C</name>
</gene>
<accession>P00331</accession>
<accession>D6W0D0</accession>
<organism>
    <name type="scientific">Saccharomyces cerevisiae (strain ATCC 204508 / S288c)</name>
    <name type="common">Baker's yeast</name>
    <dbReference type="NCBI Taxonomy" id="559292"/>
    <lineage>
        <taxon>Eukaryota</taxon>
        <taxon>Fungi</taxon>
        <taxon>Dikarya</taxon>
        <taxon>Ascomycota</taxon>
        <taxon>Saccharomycotina</taxon>
        <taxon>Saccharomycetes</taxon>
        <taxon>Saccharomycetales</taxon>
        <taxon>Saccharomycetaceae</taxon>
        <taxon>Saccharomyces</taxon>
    </lineage>
</organism>
<evidence type="ECO:0000250" key="1">
    <source>
        <dbReference type="UniProtKB" id="P00330"/>
    </source>
</evidence>
<evidence type="ECO:0000269" key="2">
    <source>
    </source>
</evidence>
<evidence type="ECO:0000269" key="3">
    <source>
    </source>
</evidence>
<evidence type="ECO:0000269" key="4">
    <source>
    </source>
</evidence>
<evidence type="ECO:0000269" key="5">
    <source>
    </source>
</evidence>
<evidence type="ECO:0000269" key="6">
    <source>
    </source>
</evidence>
<evidence type="ECO:0000269" key="7">
    <source>
    </source>
</evidence>
<evidence type="ECO:0000269" key="8">
    <source>
    </source>
</evidence>
<evidence type="ECO:0000305" key="9"/>
<evidence type="ECO:0000305" key="10">
    <source>
    </source>
</evidence>
<protein>
    <recommendedName>
        <fullName evidence="9">Alcohol dehydrogenase 2</fullName>
        <ecNumber evidence="6">1.1.1.1</ecNumber>
    </recommendedName>
    <alternativeName>
        <fullName>Alcohol dehydrogenase II</fullName>
        <shortName>ADHII</shortName>
    </alternativeName>
    <alternativeName>
        <fullName>YADH-2</fullName>
    </alternativeName>
</protein>
<sequence>MSIPETQKAIIFYESNGKLEHKDIPVPKPKPNELLINVKYSGVCHTDLHAWHGDWPLPTKLPLVGGHEGAGVVVGMGENVKGWKIGDYAGIKWLNGSCMACEYCELGNESNCPHADLSGYTHDGSFQEYATADAVQAAHIPQGTDLAEVAPILCAGITVYKALKSANLRAGHWAAISGAAGGLGSLAVQYAKAMGYRVLGIDGGPGKEELFTSLGGEVFIDFTKEKDIVSAVVKATNGGAHGIINVSVSEAAIEASTRYCRANGTVVLVGLPAGAKCSSDVFNHVVKSISIVGSYVGNRADTREALDFFARGLVKSPIKVVGLSSLPEIYEKMEKGQIAGRYVVDTSK</sequence>
<proteinExistence type="evidence at protein level"/>
<name>ADH2_YEAST</name>
<keyword id="KW-0007">Acetylation</keyword>
<keyword id="KW-0963">Cytoplasm</keyword>
<keyword id="KW-0903">Direct protein sequencing</keyword>
<keyword id="KW-1017">Isopeptide bond</keyword>
<keyword id="KW-0479">Metal-binding</keyword>
<keyword id="KW-0520">NAD</keyword>
<keyword id="KW-0560">Oxidoreductase</keyword>
<keyword id="KW-0597">Phosphoprotein</keyword>
<keyword id="KW-1185">Reference proteome</keyword>
<keyword id="KW-0832">Ubl conjugation</keyword>
<keyword id="KW-0862">Zinc</keyword>